<accession>A2T833</accession>
<accession>A2T834</accession>
<accession>B0YPN5</accession>
<comment type="function">
    <text evidence="1">One of the primary rRNA binding proteins, it binds directly to 16S rRNA where it nucleates assembly of the body of the 30S subunit.</text>
</comment>
<comment type="function">
    <text evidence="1">With S5 and S12 plays an important role in translational accuracy.</text>
</comment>
<comment type="subunit">
    <text evidence="1">Part of the 30S ribosomal subunit. Contacts protein S5. The interaction surface between S4 and S5 is involved in control of translational fidelity (By similarity).</text>
</comment>
<comment type="subcellular location">
    <subcellularLocation>
        <location>Plastid</location>
    </subcellularLocation>
</comment>
<comment type="similarity">
    <text evidence="3">Belongs to the universal ribosomal protein uS4 family.</text>
</comment>
<dbReference type="EMBL" id="EU043314">
    <property type="protein sequence ID" value="ABS54482.1"/>
    <property type="molecule type" value="Genomic_DNA"/>
</dbReference>
<dbReference type="EMBL" id="DQ983846">
    <property type="protein sequence ID" value="ABM88814.1"/>
    <property type="molecule type" value="Genomic_DNA"/>
</dbReference>
<dbReference type="EMBL" id="DQ983847">
    <property type="protein sequence ID" value="ABM88815.1"/>
    <property type="molecule type" value="Genomic_DNA"/>
</dbReference>
<dbReference type="RefSeq" id="YP_001687221.1">
    <property type="nucleotide sequence ID" value="NC_010359.1"/>
</dbReference>
<dbReference type="SMR" id="A2T833"/>
<dbReference type="GeneID" id="5952238"/>
<dbReference type="GO" id="GO:0009536">
    <property type="term" value="C:plastid"/>
    <property type="evidence" value="ECO:0007669"/>
    <property type="project" value="UniProtKB-SubCell"/>
</dbReference>
<dbReference type="GO" id="GO:0015935">
    <property type="term" value="C:small ribosomal subunit"/>
    <property type="evidence" value="ECO:0007669"/>
    <property type="project" value="InterPro"/>
</dbReference>
<dbReference type="GO" id="GO:0019843">
    <property type="term" value="F:rRNA binding"/>
    <property type="evidence" value="ECO:0007669"/>
    <property type="project" value="UniProtKB-KW"/>
</dbReference>
<dbReference type="GO" id="GO:0003735">
    <property type="term" value="F:structural constituent of ribosome"/>
    <property type="evidence" value="ECO:0007669"/>
    <property type="project" value="InterPro"/>
</dbReference>
<dbReference type="GO" id="GO:0042274">
    <property type="term" value="P:ribosomal small subunit biogenesis"/>
    <property type="evidence" value="ECO:0007669"/>
    <property type="project" value="TreeGrafter"/>
</dbReference>
<dbReference type="GO" id="GO:0006412">
    <property type="term" value="P:translation"/>
    <property type="evidence" value="ECO:0007669"/>
    <property type="project" value="InterPro"/>
</dbReference>
<dbReference type="CDD" id="cd00165">
    <property type="entry name" value="S4"/>
    <property type="match status" value="1"/>
</dbReference>
<dbReference type="FunFam" id="3.10.290.10:FF:000001">
    <property type="entry name" value="30S ribosomal protein S4"/>
    <property type="match status" value="1"/>
</dbReference>
<dbReference type="FunFam" id="1.10.1050.10:FF:000002">
    <property type="entry name" value="30S ribosomal protein S4, chloroplastic"/>
    <property type="match status" value="1"/>
</dbReference>
<dbReference type="Gene3D" id="1.10.1050.10">
    <property type="entry name" value="Ribosomal Protein S4 Delta 41, Chain A, domain 1"/>
    <property type="match status" value="1"/>
</dbReference>
<dbReference type="Gene3D" id="3.10.290.10">
    <property type="entry name" value="RNA-binding S4 domain"/>
    <property type="match status" value="1"/>
</dbReference>
<dbReference type="HAMAP" id="MF_01306_B">
    <property type="entry name" value="Ribosomal_uS4_B"/>
    <property type="match status" value="1"/>
</dbReference>
<dbReference type="InterPro" id="IPR022801">
    <property type="entry name" value="Ribosomal_uS4"/>
</dbReference>
<dbReference type="InterPro" id="IPR005709">
    <property type="entry name" value="Ribosomal_uS4_bac-type"/>
</dbReference>
<dbReference type="InterPro" id="IPR018079">
    <property type="entry name" value="Ribosomal_uS4_CS"/>
</dbReference>
<dbReference type="InterPro" id="IPR001912">
    <property type="entry name" value="Ribosomal_uS4_N"/>
</dbReference>
<dbReference type="InterPro" id="IPR002942">
    <property type="entry name" value="S4_RNA-bd"/>
</dbReference>
<dbReference type="InterPro" id="IPR036986">
    <property type="entry name" value="S4_RNA-bd_sf"/>
</dbReference>
<dbReference type="NCBIfam" id="NF003717">
    <property type="entry name" value="PRK05327.1"/>
    <property type="match status" value="1"/>
</dbReference>
<dbReference type="NCBIfam" id="TIGR01017">
    <property type="entry name" value="rpsD_bact"/>
    <property type="match status" value="1"/>
</dbReference>
<dbReference type="PANTHER" id="PTHR11831">
    <property type="entry name" value="30S 40S RIBOSOMAL PROTEIN"/>
    <property type="match status" value="1"/>
</dbReference>
<dbReference type="PANTHER" id="PTHR11831:SF4">
    <property type="entry name" value="SMALL RIBOSOMAL SUBUNIT PROTEIN US4M"/>
    <property type="match status" value="1"/>
</dbReference>
<dbReference type="Pfam" id="PF00163">
    <property type="entry name" value="Ribosomal_S4"/>
    <property type="match status" value="1"/>
</dbReference>
<dbReference type="Pfam" id="PF01479">
    <property type="entry name" value="S4"/>
    <property type="match status" value="1"/>
</dbReference>
<dbReference type="SMART" id="SM01390">
    <property type="entry name" value="Ribosomal_S4"/>
    <property type="match status" value="1"/>
</dbReference>
<dbReference type="SMART" id="SM00363">
    <property type="entry name" value="S4"/>
    <property type="match status" value="1"/>
</dbReference>
<dbReference type="SUPFAM" id="SSF55174">
    <property type="entry name" value="Alpha-L RNA-binding motif"/>
    <property type="match status" value="1"/>
</dbReference>
<dbReference type="PROSITE" id="PS00632">
    <property type="entry name" value="RIBOSOMAL_S4"/>
    <property type="match status" value="1"/>
</dbReference>
<dbReference type="PROSITE" id="PS50889">
    <property type="entry name" value="S4"/>
    <property type="match status" value="1"/>
</dbReference>
<gene>
    <name type="primary">rps4</name>
</gene>
<reference key="1">
    <citation type="journal article" date="2008" name="Mol. Biol. Evol.">
        <title>Functional gene losses occur with minimal size reduction in the plastid genome of the parasitic liverwort Aneura mirabilis.</title>
        <authorList>
            <person name="Wickett N.J."/>
            <person name="Zhang Y."/>
            <person name="Hansen S.K."/>
            <person name="Roper J.M."/>
            <person name="Kuehl J.V."/>
            <person name="Plock S.A."/>
            <person name="Wolf P.G."/>
            <person name="dePamphilis C.W."/>
            <person name="Boore J.L."/>
            <person name="Goffinet B."/>
        </authorList>
    </citation>
    <scope>NUCLEOTIDE SEQUENCE [LARGE SCALE GENOMIC DNA]</scope>
</reference>
<reference key="2">
    <citation type="submission" date="2006-09" db="EMBL/GenBank/DDBJ databases">
        <title>Origin and relationships of the myco-heterotrophic liverwort Cryptothallus mirabilis Malmb. (Metzgeriales, Marchantiophyta).</title>
        <authorList>
            <person name="Wickett N.J."/>
            <person name="Goffinet B."/>
        </authorList>
    </citation>
    <scope>NUCLEOTIDE SEQUENCE [GENOMIC DNA] OF 11-202</scope>
    <source>
        <strain>49</strain>
        <strain>51</strain>
    </source>
</reference>
<name>RR4_ANEMR</name>
<sequence>MSRYRGPRMKMIRRPGTLPGLTSKTPGTKVGSSDRSTSSKKISQYRIRLEEKQKLRLHYGLTERQLLKYVFTARGAKGSTGQLLLQLLEMRLDNTIFRLGIVPTIPAARQLVNHRHVSINEHIIDIPSYNCKPGDVITINNREKCRLVDRRDMNSLQKPEIPNHLTFDSKEFLGSVQQIIDRDWIDLKINELLVVEYYSRRV</sequence>
<geneLocation type="non-photosynthetic plastid"/>
<feature type="chain" id="PRO_0000293424" description="Small ribosomal subunit protein uS4c">
    <location>
        <begin position="1"/>
        <end position="202"/>
    </location>
</feature>
<feature type="domain" description="S4 RNA-binding">
    <location>
        <begin position="90"/>
        <end position="153"/>
    </location>
</feature>
<feature type="region of interest" description="Disordered" evidence="2">
    <location>
        <begin position="1"/>
        <end position="41"/>
    </location>
</feature>
<feature type="compositionally biased region" description="Basic residues" evidence="2">
    <location>
        <begin position="1"/>
        <end position="13"/>
    </location>
</feature>
<feature type="compositionally biased region" description="Low complexity" evidence="2">
    <location>
        <begin position="29"/>
        <end position="41"/>
    </location>
</feature>
<feature type="sequence variant" description="In strain: 51.">
    <original>PG</original>
    <variation>QA</variation>
    <location>
        <begin position="15"/>
        <end position="16"/>
    </location>
</feature>
<evidence type="ECO:0000250" key="1"/>
<evidence type="ECO:0000256" key="2">
    <source>
        <dbReference type="SAM" id="MobiDB-lite"/>
    </source>
</evidence>
<evidence type="ECO:0000305" key="3"/>
<keyword id="KW-0934">Plastid</keyword>
<keyword id="KW-0687">Ribonucleoprotein</keyword>
<keyword id="KW-0689">Ribosomal protein</keyword>
<keyword id="KW-0694">RNA-binding</keyword>
<keyword id="KW-0699">rRNA-binding</keyword>
<organism>
    <name type="scientific">Aneura mirabilis</name>
    <name type="common">Parasitic liverwort</name>
    <name type="synonym">Cryptothallus mirabilis</name>
    <dbReference type="NCBI Taxonomy" id="280810"/>
    <lineage>
        <taxon>Eukaryota</taxon>
        <taxon>Viridiplantae</taxon>
        <taxon>Streptophyta</taxon>
        <taxon>Embryophyta</taxon>
        <taxon>Marchantiophyta</taxon>
        <taxon>Jungermanniopsida</taxon>
        <taxon>Metzgeriidae</taxon>
        <taxon>Metzgeriales</taxon>
        <taxon>Aneuraceae</taxon>
        <taxon>Aneura</taxon>
    </lineage>
</organism>
<proteinExistence type="inferred from homology"/>
<protein>
    <recommendedName>
        <fullName evidence="3">Small ribosomal subunit protein uS4c</fullName>
    </recommendedName>
    <alternativeName>
        <fullName>Plastid 30S ribosomal protein S4</fullName>
    </alternativeName>
</protein>